<comment type="function">
    <text evidence="1">Required for maturation of 30S ribosomal subunits.</text>
</comment>
<comment type="subcellular location">
    <subcellularLocation>
        <location evidence="1">Cytoplasm</location>
    </subcellularLocation>
</comment>
<comment type="similarity">
    <text evidence="1">Belongs to the RimP family.</text>
</comment>
<sequence length="155" mass="16799">MPHPLLPDLETLATKVAASKGFALCGIQLLTHMSPMTLEVQIRHSSGADVSLDDCAGFSGVLGDALEASTLLTDAYVLEISSPGIGDQLSSDRDFETFRGFPVEVHHRDKDDSEQRLEGLLLERDADTLQINIRGRIKRIARDCVIGVRLTSPGS</sequence>
<feature type="chain" id="PRO_1000064792" description="Ribosome maturation factor RimP">
    <location>
        <begin position="1"/>
        <end position="155"/>
    </location>
</feature>
<name>RIMP_SYNSC</name>
<gene>
    <name evidence="1" type="primary">rimP</name>
    <name type="ordered locus">Syncc9605_2078</name>
</gene>
<organism>
    <name type="scientific">Synechococcus sp. (strain CC9605)</name>
    <dbReference type="NCBI Taxonomy" id="110662"/>
    <lineage>
        <taxon>Bacteria</taxon>
        <taxon>Bacillati</taxon>
        <taxon>Cyanobacteriota</taxon>
        <taxon>Cyanophyceae</taxon>
        <taxon>Synechococcales</taxon>
        <taxon>Synechococcaceae</taxon>
        <taxon>Synechococcus</taxon>
    </lineage>
</organism>
<dbReference type="EMBL" id="CP000110">
    <property type="protein sequence ID" value="ABB35818.1"/>
    <property type="molecule type" value="Genomic_DNA"/>
</dbReference>
<dbReference type="RefSeq" id="WP_011365027.1">
    <property type="nucleotide sequence ID" value="NC_007516.1"/>
</dbReference>
<dbReference type="SMR" id="Q3AHW4"/>
<dbReference type="STRING" id="110662.Syncc9605_2078"/>
<dbReference type="KEGG" id="syd:Syncc9605_2078"/>
<dbReference type="eggNOG" id="COG0779">
    <property type="taxonomic scope" value="Bacteria"/>
</dbReference>
<dbReference type="HOGENOM" id="CLU_070525_2_1_3"/>
<dbReference type="OrthoDB" id="9805006at2"/>
<dbReference type="GO" id="GO:0005829">
    <property type="term" value="C:cytosol"/>
    <property type="evidence" value="ECO:0007669"/>
    <property type="project" value="TreeGrafter"/>
</dbReference>
<dbReference type="GO" id="GO:0000028">
    <property type="term" value="P:ribosomal small subunit assembly"/>
    <property type="evidence" value="ECO:0007669"/>
    <property type="project" value="TreeGrafter"/>
</dbReference>
<dbReference type="GO" id="GO:0006412">
    <property type="term" value="P:translation"/>
    <property type="evidence" value="ECO:0007669"/>
    <property type="project" value="TreeGrafter"/>
</dbReference>
<dbReference type="Gene3D" id="3.30.300.70">
    <property type="entry name" value="RimP-like superfamily, N-terminal"/>
    <property type="match status" value="1"/>
</dbReference>
<dbReference type="HAMAP" id="MF_01077">
    <property type="entry name" value="RimP"/>
    <property type="match status" value="1"/>
</dbReference>
<dbReference type="InterPro" id="IPR003728">
    <property type="entry name" value="Ribosome_maturation_RimP"/>
</dbReference>
<dbReference type="InterPro" id="IPR036847">
    <property type="entry name" value="RimP_C_sf"/>
</dbReference>
<dbReference type="InterPro" id="IPR028989">
    <property type="entry name" value="RimP_N"/>
</dbReference>
<dbReference type="InterPro" id="IPR035956">
    <property type="entry name" value="RimP_N_sf"/>
</dbReference>
<dbReference type="NCBIfam" id="NF011227">
    <property type="entry name" value="PRK14634.1"/>
    <property type="match status" value="1"/>
</dbReference>
<dbReference type="PANTHER" id="PTHR33867">
    <property type="entry name" value="RIBOSOME MATURATION FACTOR RIMP"/>
    <property type="match status" value="1"/>
</dbReference>
<dbReference type="PANTHER" id="PTHR33867:SF1">
    <property type="entry name" value="RIBOSOME MATURATION FACTOR RIMP"/>
    <property type="match status" value="1"/>
</dbReference>
<dbReference type="Pfam" id="PF02576">
    <property type="entry name" value="RimP_N"/>
    <property type="match status" value="1"/>
</dbReference>
<dbReference type="SUPFAM" id="SSF74942">
    <property type="entry name" value="YhbC-like, C-terminal domain"/>
    <property type="match status" value="1"/>
</dbReference>
<dbReference type="SUPFAM" id="SSF75420">
    <property type="entry name" value="YhbC-like, N-terminal domain"/>
    <property type="match status" value="1"/>
</dbReference>
<keyword id="KW-0963">Cytoplasm</keyword>
<keyword id="KW-0690">Ribosome biogenesis</keyword>
<protein>
    <recommendedName>
        <fullName evidence="1">Ribosome maturation factor RimP</fullName>
    </recommendedName>
</protein>
<proteinExistence type="inferred from homology"/>
<reference key="1">
    <citation type="submission" date="2005-07" db="EMBL/GenBank/DDBJ databases">
        <title>Complete sequence of Synechococcus sp. CC9605.</title>
        <authorList>
            <consortium name="US DOE Joint Genome Institute"/>
            <person name="Copeland A."/>
            <person name="Lucas S."/>
            <person name="Lapidus A."/>
            <person name="Barry K."/>
            <person name="Detter J.C."/>
            <person name="Glavina T."/>
            <person name="Hammon N."/>
            <person name="Israni S."/>
            <person name="Pitluck S."/>
            <person name="Schmutz J."/>
            <person name="Martinez M."/>
            <person name="Larimer F."/>
            <person name="Land M."/>
            <person name="Kyrpides N."/>
            <person name="Ivanova N."/>
            <person name="Richardson P."/>
        </authorList>
    </citation>
    <scope>NUCLEOTIDE SEQUENCE [LARGE SCALE GENOMIC DNA]</scope>
    <source>
        <strain>CC9605</strain>
    </source>
</reference>
<accession>Q3AHW4</accession>
<evidence type="ECO:0000255" key="1">
    <source>
        <dbReference type="HAMAP-Rule" id="MF_01077"/>
    </source>
</evidence>